<comment type="subcellular location">
    <subcellularLocation>
        <location>Plastid</location>
        <location>Chloroplast</location>
    </subcellularLocation>
</comment>
<comment type="similarity">
    <text evidence="1">Belongs to the bacterial ribosomal protein bL33 family.</text>
</comment>
<proteinExistence type="inferred from homology"/>
<accession>Q2MI79</accession>
<feature type="chain" id="PRO_0000276517" description="Large ribosomal subunit protein bL33c">
    <location>
        <begin position="1"/>
        <end position="66"/>
    </location>
</feature>
<evidence type="ECO:0000255" key="1">
    <source>
        <dbReference type="HAMAP-Rule" id="MF_00294"/>
    </source>
</evidence>
<evidence type="ECO:0000305" key="2"/>
<keyword id="KW-0150">Chloroplast</keyword>
<keyword id="KW-0934">Plastid</keyword>
<keyword id="KW-1185">Reference proteome</keyword>
<keyword id="KW-0687">Ribonucleoprotein</keyword>
<keyword id="KW-0689">Ribosomal protein</keyword>
<name>RK33_SOLLC</name>
<gene>
    <name evidence="1" type="primary">rpl33</name>
</gene>
<organism>
    <name type="scientific">Solanum lycopersicum</name>
    <name type="common">Tomato</name>
    <name type="synonym">Lycopersicon esculentum</name>
    <dbReference type="NCBI Taxonomy" id="4081"/>
    <lineage>
        <taxon>Eukaryota</taxon>
        <taxon>Viridiplantae</taxon>
        <taxon>Streptophyta</taxon>
        <taxon>Embryophyta</taxon>
        <taxon>Tracheophyta</taxon>
        <taxon>Spermatophyta</taxon>
        <taxon>Magnoliopsida</taxon>
        <taxon>eudicotyledons</taxon>
        <taxon>Gunneridae</taxon>
        <taxon>Pentapetalae</taxon>
        <taxon>asterids</taxon>
        <taxon>lamiids</taxon>
        <taxon>Solanales</taxon>
        <taxon>Solanaceae</taxon>
        <taxon>Solanoideae</taxon>
        <taxon>Solaneae</taxon>
        <taxon>Solanum</taxon>
        <taxon>Solanum subgen. Lycopersicon</taxon>
    </lineage>
</organism>
<reference key="1">
    <citation type="journal article" date="2006" name="Theor. Appl. Genet.">
        <title>Complete chloroplast genome sequences of Solanum bulbocastanum, Solanum lycopersicum and comparative analyses with other Solanaceae genomes.</title>
        <authorList>
            <person name="Daniell H."/>
            <person name="Lee S.-B."/>
            <person name="Grevich J."/>
            <person name="Saski C."/>
            <person name="Quesada-Vargas T."/>
            <person name="Guda C."/>
            <person name="Tomkins J."/>
            <person name="Jansen R.K."/>
        </authorList>
    </citation>
    <scope>NUCLEOTIDE SEQUENCE [LARGE SCALE GENOMIC DNA]</scope>
    <source>
        <strain>cv. LA3023</strain>
    </source>
</reference>
<reference key="2">
    <citation type="journal article" date="2006" name="J. Mol. Evol.">
        <title>Sequence of the tomato chloroplast DNA and evolutionary comparison of solanaceous plastid genomes.</title>
        <authorList>
            <person name="Kahlau S."/>
            <person name="Aspinall S."/>
            <person name="Gray J.C."/>
            <person name="Bock R."/>
        </authorList>
    </citation>
    <scope>NUCLEOTIDE SEQUENCE [LARGE SCALE GENOMIC DNA]</scope>
    <source>
        <strain>cv. IPA-6</strain>
    </source>
</reference>
<protein>
    <recommendedName>
        <fullName evidence="1">Large ribosomal subunit protein bL33c</fullName>
    </recommendedName>
    <alternativeName>
        <fullName evidence="2">50S ribosomal protein L33, chloroplastic</fullName>
    </alternativeName>
</protein>
<dbReference type="EMBL" id="DQ347959">
    <property type="protein sequence ID" value="ABC56321.1"/>
    <property type="molecule type" value="Genomic_DNA"/>
</dbReference>
<dbReference type="EMBL" id="AM087200">
    <property type="protein sequence ID" value="CAJ32414.1"/>
    <property type="molecule type" value="Genomic_DNA"/>
</dbReference>
<dbReference type="RefSeq" id="AP_004949.1">
    <property type="nucleotide sequence ID" value="AC_000188.1"/>
</dbReference>
<dbReference type="RefSeq" id="YP_008563109.1">
    <property type="nucleotide sequence ID" value="NC_007898.3"/>
</dbReference>
<dbReference type="FunCoup" id="Q2MI79">
    <property type="interactions" value="35"/>
</dbReference>
<dbReference type="STRING" id="4081.Q2MI79"/>
<dbReference type="PaxDb" id="4081-Solyc01g007450.1.1"/>
<dbReference type="EnsemblPlants" id="Solyc09g064410.1.1">
    <property type="protein sequence ID" value="Solyc09g064410.1.1.1"/>
    <property type="gene ID" value="Solyc09g064410.1"/>
</dbReference>
<dbReference type="GeneID" id="3950382"/>
<dbReference type="Gramene" id="Solyc09g064410.1.1">
    <property type="protein sequence ID" value="Solyc09g064410.1.1.1"/>
    <property type="gene ID" value="Solyc09g064410.1"/>
</dbReference>
<dbReference type="KEGG" id="sly:3950382"/>
<dbReference type="eggNOG" id="ENOG502S7HT">
    <property type="taxonomic scope" value="Eukaryota"/>
</dbReference>
<dbReference type="HOGENOM" id="CLU_190949_3_0_1"/>
<dbReference type="InParanoid" id="Q2MI79"/>
<dbReference type="OMA" id="ECTEHKA"/>
<dbReference type="OrthoDB" id="361870at2759"/>
<dbReference type="PhylomeDB" id="Q2MI79"/>
<dbReference type="Proteomes" id="UP000004994">
    <property type="component" value="Chloroplast"/>
</dbReference>
<dbReference type="ExpressionAtlas" id="Q2MI79">
    <property type="expression patterns" value="baseline"/>
</dbReference>
<dbReference type="GO" id="GO:0009507">
    <property type="term" value="C:chloroplast"/>
    <property type="evidence" value="ECO:0007669"/>
    <property type="project" value="UniProtKB-SubCell"/>
</dbReference>
<dbReference type="GO" id="GO:1990904">
    <property type="term" value="C:ribonucleoprotein complex"/>
    <property type="evidence" value="ECO:0007669"/>
    <property type="project" value="UniProtKB-KW"/>
</dbReference>
<dbReference type="GO" id="GO:0005840">
    <property type="term" value="C:ribosome"/>
    <property type="evidence" value="ECO:0007669"/>
    <property type="project" value="UniProtKB-KW"/>
</dbReference>
<dbReference type="GO" id="GO:0003735">
    <property type="term" value="F:structural constituent of ribosome"/>
    <property type="evidence" value="ECO:0007669"/>
    <property type="project" value="InterPro"/>
</dbReference>
<dbReference type="GO" id="GO:0006412">
    <property type="term" value="P:translation"/>
    <property type="evidence" value="ECO:0007669"/>
    <property type="project" value="UniProtKB-UniRule"/>
</dbReference>
<dbReference type="Gene3D" id="2.20.28.120">
    <property type="entry name" value="Ribosomal protein L33"/>
    <property type="match status" value="1"/>
</dbReference>
<dbReference type="HAMAP" id="MF_00294">
    <property type="entry name" value="Ribosomal_bL33"/>
    <property type="match status" value="1"/>
</dbReference>
<dbReference type="InterPro" id="IPR001705">
    <property type="entry name" value="Ribosomal_bL33"/>
</dbReference>
<dbReference type="InterPro" id="IPR018264">
    <property type="entry name" value="Ribosomal_bL33_CS"/>
</dbReference>
<dbReference type="InterPro" id="IPR038584">
    <property type="entry name" value="Ribosomal_bL33_sf"/>
</dbReference>
<dbReference type="InterPro" id="IPR011332">
    <property type="entry name" value="Ribosomal_zn-bd"/>
</dbReference>
<dbReference type="NCBIfam" id="NF001764">
    <property type="entry name" value="PRK00504.1"/>
    <property type="match status" value="1"/>
</dbReference>
<dbReference type="NCBIfam" id="NF001860">
    <property type="entry name" value="PRK00595.1"/>
    <property type="match status" value="1"/>
</dbReference>
<dbReference type="NCBIfam" id="TIGR01023">
    <property type="entry name" value="rpmG_bact"/>
    <property type="match status" value="1"/>
</dbReference>
<dbReference type="PANTHER" id="PTHR43168">
    <property type="entry name" value="50S RIBOSOMAL PROTEIN L33, CHLOROPLASTIC"/>
    <property type="match status" value="1"/>
</dbReference>
<dbReference type="PANTHER" id="PTHR43168:SF2">
    <property type="entry name" value="LARGE RIBOSOMAL SUBUNIT PROTEIN BL33C"/>
    <property type="match status" value="1"/>
</dbReference>
<dbReference type="Pfam" id="PF00471">
    <property type="entry name" value="Ribosomal_L33"/>
    <property type="match status" value="1"/>
</dbReference>
<dbReference type="SUPFAM" id="SSF57829">
    <property type="entry name" value="Zn-binding ribosomal proteins"/>
    <property type="match status" value="1"/>
</dbReference>
<dbReference type="PROSITE" id="PS00582">
    <property type="entry name" value="RIBOSOMAL_L33"/>
    <property type="match status" value="1"/>
</dbReference>
<sequence>MAKGKDVRVTVILECTSCVRNSVDKVSRGISRYITQKNRHNTPNRFELKKFCPYCYKHTIHGEIKK</sequence>
<geneLocation type="chloroplast"/>